<sequence>MNRLLKTVIENNRKWISEGKVASYIPELSKMDKNLLGISVCTLGGEEYWEGDAEVKFTIQSISKIVTLMLAIIDNGEDYVFSKVGMEPTETAFNSIVNLEAKESHKPINPMINAGAIVVASMVAGKDSDEKFDRILKFTRKISGNNNIDINLNVYTSEKETGHRNRALAYFMKSTGALKGDVEEILDVYFKQCSIEITCKDLARIGVMLANDGVSPYTGDRIVPRYVARIVKTIMVTCGMYDASGNFAVHIGIPAKSGVGGGIVACAPRRMGIGVLGTALDEKGNSIAGTKILEELSKQLDLSIF</sequence>
<name>GLSA_CLOBM</name>
<accession>B1KYY3</accession>
<feature type="chain" id="PRO_1000115696" description="Glutaminase">
    <location>
        <begin position="1"/>
        <end position="305"/>
    </location>
</feature>
<feature type="binding site" evidence="1">
    <location>
        <position position="61"/>
    </location>
    <ligand>
        <name>substrate</name>
    </ligand>
</feature>
<feature type="binding site" evidence="1">
    <location>
        <position position="113"/>
    </location>
    <ligand>
        <name>substrate</name>
    </ligand>
</feature>
<feature type="binding site" evidence="1">
    <location>
        <position position="158"/>
    </location>
    <ligand>
        <name>substrate</name>
    </ligand>
</feature>
<feature type="binding site" evidence="1">
    <location>
        <position position="165"/>
    </location>
    <ligand>
        <name>substrate</name>
    </ligand>
</feature>
<feature type="binding site" evidence="1">
    <location>
        <position position="189"/>
    </location>
    <ligand>
        <name>substrate</name>
    </ligand>
</feature>
<feature type="binding site" evidence="1">
    <location>
        <position position="241"/>
    </location>
    <ligand>
        <name>substrate</name>
    </ligand>
</feature>
<feature type="binding site" evidence="1">
    <location>
        <position position="259"/>
    </location>
    <ligand>
        <name>substrate</name>
    </ligand>
</feature>
<keyword id="KW-0378">Hydrolase</keyword>
<comment type="catalytic activity">
    <reaction evidence="1">
        <text>L-glutamine + H2O = L-glutamate + NH4(+)</text>
        <dbReference type="Rhea" id="RHEA:15889"/>
        <dbReference type="ChEBI" id="CHEBI:15377"/>
        <dbReference type="ChEBI" id="CHEBI:28938"/>
        <dbReference type="ChEBI" id="CHEBI:29985"/>
        <dbReference type="ChEBI" id="CHEBI:58359"/>
        <dbReference type="EC" id="3.5.1.2"/>
    </reaction>
</comment>
<comment type="subunit">
    <text evidence="1">Homotetramer.</text>
</comment>
<comment type="similarity">
    <text evidence="1">Belongs to the glutaminase family.</text>
</comment>
<evidence type="ECO:0000255" key="1">
    <source>
        <dbReference type="HAMAP-Rule" id="MF_00313"/>
    </source>
</evidence>
<gene>
    <name evidence="1" type="primary">glsA</name>
    <name type="ordered locus">CLK_2195</name>
</gene>
<protein>
    <recommendedName>
        <fullName evidence="1">Glutaminase</fullName>
        <ecNumber evidence="1">3.5.1.2</ecNumber>
    </recommendedName>
</protein>
<dbReference type="EC" id="3.5.1.2" evidence="1"/>
<dbReference type="EMBL" id="CP000962">
    <property type="protein sequence ID" value="ACA56877.1"/>
    <property type="molecule type" value="Genomic_DNA"/>
</dbReference>
<dbReference type="RefSeq" id="WP_012344686.1">
    <property type="nucleotide sequence ID" value="NC_010520.1"/>
</dbReference>
<dbReference type="SMR" id="B1KYY3"/>
<dbReference type="KEGG" id="cbl:CLK_2195"/>
<dbReference type="HOGENOM" id="CLU_027932_1_0_9"/>
<dbReference type="GO" id="GO:0004359">
    <property type="term" value="F:glutaminase activity"/>
    <property type="evidence" value="ECO:0007669"/>
    <property type="project" value="UniProtKB-UniRule"/>
</dbReference>
<dbReference type="GO" id="GO:0006537">
    <property type="term" value="P:glutamate biosynthetic process"/>
    <property type="evidence" value="ECO:0007669"/>
    <property type="project" value="TreeGrafter"/>
</dbReference>
<dbReference type="GO" id="GO:0006543">
    <property type="term" value="P:glutamine catabolic process"/>
    <property type="evidence" value="ECO:0007669"/>
    <property type="project" value="TreeGrafter"/>
</dbReference>
<dbReference type="FunFam" id="3.40.710.10:FF:000005">
    <property type="entry name" value="Glutaminase"/>
    <property type="match status" value="1"/>
</dbReference>
<dbReference type="Gene3D" id="3.40.710.10">
    <property type="entry name" value="DD-peptidase/beta-lactamase superfamily"/>
    <property type="match status" value="1"/>
</dbReference>
<dbReference type="HAMAP" id="MF_00313">
    <property type="entry name" value="Glutaminase"/>
    <property type="match status" value="1"/>
</dbReference>
<dbReference type="InterPro" id="IPR012338">
    <property type="entry name" value="Beta-lactam/transpept-like"/>
</dbReference>
<dbReference type="InterPro" id="IPR015868">
    <property type="entry name" value="Glutaminase"/>
</dbReference>
<dbReference type="NCBIfam" id="TIGR03814">
    <property type="entry name" value="Gln_ase"/>
    <property type="match status" value="1"/>
</dbReference>
<dbReference type="PANTHER" id="PTHR12544">
    <property type="entry name" value="GLUTAMINASE"/>
    <property type="match status" value="1"/>
</dbReference>
<dbReference type="PANTHER" id="PTHR12544:SF29">
    <property type="entry name" value="GLUTAMINASE"/>
    <property type="match status" value="1"/>
</dbReference>
<dbReference type="Pfam" id="PF04960">
    <property type="entry name" value="Glutaminase"/>
    <property type="match status" value="1"/>
</dbReference>
<dbReference type="SUPFAM" id="SSF56601">
    <property type="entry name" value="beta-lactamase/transpeptidase-like"/>
    <property type="match status" value="1"/>
</dbReference>
<organism>
    <name type="scientific">Clostridium botulinum (strain Loch Maree / Type A3)</name>
    <dbReference type="NCBI Taxonomy" id="498214"/>
    <lineage>
        <taxon>Bacteria</taxon>
        <taxon>Bacillati</taxon>
        <taxon>Bacillota</taxon>
        <taxon>Clostridia</taxon>
        <taxon>Eubacteriales</taxon>
        <taxon>Clostridiaceae</taxon>
        <taxon>Clostridium</taxon>
    </lineage>
</organism>
<reference key="1">
    <citation type="journal article" date="2007" name="PLoS ONE">
        <title>Analysis of the neurotoxin complex genes in Clostridium botulinum A1-A4 and B1 strains: BoNT/A3, /Ba4 and /B1 clusters are located within plasmids.</title>
        <authorList>
            <person name="Smith T.J."/>
            <person name="Hill K.K."/>
            <person name="Foley B.T."/>
            <person name="Detter J.C."/>
            <person name="Munk A.C."/>
            <person name="Bruce D.C."/>
            <person name="Doggett N.A."/>
            <person name="Smith L.A."/>
            <person name="Marks J.D."/>
            <person name="Xie G."/>
            <person name="Brettin T.S."/>
        </authorList>
    </citation>
    <scope>NUCLEOTIDE SEQUENCE [LARGE SCALE GENOMIC DNA]</scope>
    <source>
        <strain>Loch Maree / Type A3</strain>
    </source>
</reference>
<proteinExistence type="inferred from homology"/>